<reference key="1">
    <citation type="journal article" date="1997" name="Virology">
        <title>The sequence of the Orgyia pseudotsugata multinucleocapsid nuclear polyhedrosis virus genome.</title>
        <authorList>
            <person name="Ahrens C.H."/>
            <person name="Russell R.R."/>
            <person name="Funk C.J."/>
            <person name="Evans J."/>
            <person name="Harwood S."/>
            <person name="Rohrmann G.F."/>
        </authorList>
    </citation>
    <scope>NUCLEOTIDE SEQUENCE [LARGE SCALE GENOMIC DNA]</scope>
</reference>
<accession>O10346</accession>
<keyword id="KW-1185">Reference proteome</keyword>
<proteinExistence type="predicted"/>
<organismHost>
    <name type="scientific">Orgyia pseudotsugata</name>
    <name type="common">Douglas-fir tussock moth</name>
    <dbReference type="NCBI Taxonomy" id="33414"/>
</organismHost>
<gene>
    <name type="ORF">ORF107</name>
</gene>
<organism>
    <name type="scientific">Orgyia pseudotsugata multicapsid polyhedrosis virus</name>
    <name type="common">OpMNPV</name>
    <dbReference type="NCBI Taxonomy" id="262177"/>
    <lineage>
        <taxon>Viruses</taxon>
        <taxon>Viruses incertae sedis</taxon>
        <taxon>Naldaviricetes</taxon>
        <taxon>Lefavirales</taxon>
        <taxon>Baculoviridae</taxon>
        <taxon>Alphabaculovirus</taxon>
        <taxon>Alphabaculovirus orpseudotsugatae</taxon>
    </lineage>
</organism>
<name>Y107_NPVOP</name>
<evidence type="ECO:0000256" key="1">
    <source>
        <dbReference type="SAM" id="MobiDB-lite"/>
    </source>
</evidence>
<feature type="chain" id="PRO_0000133040" description="Uncharacterized 29.4 kDa protein">
    <location>
        <begin position="1"/>
        <end position="256"/>
    </location>
</feature>
<feature type="region of interest" description="Disordered" evidence="1">
    <location>
        <begin position="211"/>
        <end position="256"/>
    </location>
</feature>
<feature type="compositionally biased region" description="Low complexity" evidence="1">
    <location>
        <begin position="246"/>
        <end position="256"/>
    </location>
</feature>
<dbReference type="EMBL" id="U75930">
    <property type="protein sequence ID" value="AAC59106.1"/>
    <property type="molecule type" value="Genomic_DNA"/>
</dbReference>
<dbReference type="RefSeq" id="NP_046263.1">
    <property type="nucleotide sequence ID" value="NC_001875.2"/>
</dbReference>
<dbReference type="KEGG" id="vg:912037"/>
<dbReference type="OrthoDB" id="8415at10239"/>
<dbReference type="Proteomes" id="UP000009248">
    <property type="component" value="Genome"/>
</dbReference>
<dbReference type="InterPro" id="IPR008534">
    <property type="entry name" value="DUF816"/>
</dbReference>
<dbReference type="Pfam" id="PF05674">
    <property type="entry name" value="DUF816"/>
    <property type="match status" value="1"/>
</dbReference>
<sequence>MDAKYKVVDVDTFARQLITDKCSELIETENLLPANILHVVKQARDKYFEDPSVKNYEYVKNLFLRTKYMDDSIDYKNFNRRVLLIVFKFALNRGSGYFPSYRELIEVAVKRLNKINPDLKSSPRAMLQHYNECLENLDNPVTDEHHLLTFGKEVATKMFIEAFEFSYASNNEINLTTNKRGSDLFDPIPMPAPAPAPSASLLDNVMNERKRKLQASVTTTPPKRCKLADRPAQTTQDTPRAPQPAPVRAQRPLFTL</sequence>
<protein>
    <recommendedName>
        <fullName>Uncharacterized 29.4 kDa protein</fullName>
    </recommendedName>
</protein>